<evidence type="ECO:0000255" key="1">
    <source>
        <dbReference type="HAMAP-Rule" id="MF_01637"/>
    </source>
</evidence>
<reference key="1">
    <citation type="submission" date="2007-02" db="EMBL/GenBank/DDBJ databases">
        <title>Complete sequence of chromosome of Shewanella baltica OS155.</title>
        <authorList>
            <consortium name="US DOE Joint Genome Institute"/>
            <person name="Copeland A."/>
            <person name="Lucas S."/>
            <person name="Lapidus A."/>
            <person name="Barry K."/>
            <person name="Detter J.C."/>
            <person name="Glavina del Rio T."/>
            <person name="Hammon N."/>
            <person name="Israni S."/>
            <person name="Dalin E."/>
            <person name="Tice H."/>
            <person name="Pitluck S."/>
            <person name="Sims D.R."/>
            <person name="Brettin T."/>
            <person name="Bruce D."/>
            <person name="Han C."/>
            <person name="Tapia R."/>
            <person name="Brainard J."/>
            <person name="Schmutz J."/>
            <person name="Larimer F."/>
            <person name="Land M."/>
            <person name="Hauser L."/>
            <person name="Kyrpides N."/>
            <person name="Mikhailova N."/>
            <person name="Brettar I."/>
            <person name="Klappenbach J."/>
            <person name="Konstantinidis K."/>
            <person name="Rodrigues J."/>
            <person name="Tiedje J."/>
            <person name="Richardson P."/>
        </authorList>
    </citation>
    <scope>NUCLEOTIDE SEQUENCE [LARGE SCALE GENOMIC DNA]</scope>
    <source>
        <strain>OS155 / ATCC BAA-1091</strain>
    </source>
</reference>
<name>NFUA_SHEB5</name>
<sequence>MITISDAAQAHFVKLLADQPEGTHIRVFVISPGTSQAECGVSYCPPDAVESDDIEIEFTGFNAMVDEKSAPFLEDATIDFVTDQLGSQLTLKAPNAKMRKVSGDAPLVERIEYVIQSEINPQLAGHGGNIMLVEITKEGVAVLQFGGGCNGCSQVDITLKDGIEKQLLDMFPGELTGVRDVTDHQHGEHSYA</sequence>
<gene>
    <name evidence="1" type="primary">nfuA</name>
    <name type="ordered locus">Sbal_0142</name>
</gene>
<feature type="chain" id="PRO_1000069875" description="Fe/S biogenesis protein NfuA">
    <location>
        <begin position="1"/>
        <end position="192"/>
    </location>
</feature>
<feature type="binding site" evidence="1">
    <location>
        <position position="149"/>
    </location>
    <ligand>
        <name>[4Fe-4S] cluster</name>
        <dbReference type="ChEBI" id="CHEBI:49883"/>
    </ligand>
</feature>
<feature type="binding site" evidence="1">
    <location>
        <position position="152"/>
    </location>
    <ligand>
        <name>[4Fe-4S] cluster</name>
        <dbReference type="ChEBI" id="CHEBI:49883"/>
    </ligand>
</feature>
<organism>
    <name type="scientific">Shewanella baltica (strain OS155 / ATCC BAA-1091)</name>
    <dbReference type="NCBI Taxonomy" id="325240"/>
    <lineage>
        <taxon>Bacteria</taxon>
        <taxon>Pseudomonadati</taxon>
        <taxon>Pseudomonadota</taxon>
        <taxon>Gammaproteobacteria</taxon>
        <taxon>Alteromonadales</taxon>
        <taxon>Shewanellaceae</taxon>
        <taxon>Shewanella</taxon>
    </lineage>
</organism>
<comment type="function">
    <text evidence="1">Involved in iron-sulfur cluster biogenesis. Binds a 4Fe-4S cluster, can transfer this cluster to apoproteins, and thereby intervenes in the maturation of Fe/S proteins. Could also act as a scaffold/chaperone for damaged Fe/S proteins.</text>
</comment>
<comment type="cofactor">
    <cofactor evidence="1">
        <name>[4Fe-4S] cluster</name>
        <dbReference type="ChEBI" id="CHEBI:49883"/>
    </cofactor>
    <text evidence="1">Binds 1 [4Fe-4S] cluster per subunit. The cluster is presumably bound at the interface of two monomers.</text>
</comment>
<comment type="subunit">
    <text evidence="1">Homodimer.</text>
</comment>
<comment type="similarity">
    <text evidence="1">Belongs to the NfuA family.</text>
</comment>
<protein>
    <recommendedName>
        <fullName evidence="1">Fe/S biogenesis protein NfuA</fullName>
    </recommendedName>
</protein>
<keyword id="KW-0004">4Fe-4S</keyword>
<keyword id="KW-0408">Iron</keyword>
<keyword id="KW-0411">Iron-sulfur</keyword>
<keyword id="KW-0479">Metal-binding</keyword>
<keyword id="KW-1185">Reference proteome</keyword>
<accession>A3CYW3</accession>
<proteinExistence type="inferred from homology"/>
<dbReference type="EMBL" id="CP000563">
    <property type="protein sequence ID" value="ABN59676.1"/>
    <property type="molecule type" value="Genomic_DNA"/>
</dbReference>
<dbReference type="RefSeq" id="WP_006079591.1">
    <property type="nucleotide sequence ID" value="NC_009052.1"/>
</dbReference>
<dbReference type="SMR" id="A3CYW3"/>
<dbReference type="STRING" id="325240.Sbal_0142"/>
<dbReference type="GeneID" id="11775045"/>
<dbReference type="KEGG" id="sbl:Sbal_0142"/>
<dbReference type="HOGENOM" id="CLU_094569_0_0_6"/>
<dbReference type="OrthoDB" id="9785450at2"/>
<dbReference type="Proteomes" id="UP000001557">
    <property type="component" value="Chromosome"/>
</dbReference>
<dbReference type="GO" id="GO:0051539">
    <property type="term" value="F:4 iron, 4 sulfur cluster binding"/>
    <property type="evidence" value="ECO:0007669"/>
    <property type="project" value="UniProtKB-UniRule"/>
</dbReference>
<dbReference type="GO" id="GO:0005506">
    <property type="term" value="F:iron ion binding"/>
    <property type="evidence" value="ECO:0007669"/>
    <property type="project" value="InterPro"/>
</dbReference>
<dbReference type="GO" id="GO:0016226">
    <property type="term" value="P:iron-sulfur cluster assembly"/>
    <property type="evidence" value="ECO:0007669"/>
    <property type="project" value="UniProtKB-UniRule"/>
</dbReference>
<dbReference type="GO" id="GO:0051604">
    <property type="term" value="P:protein maturation"/>
    <property type="evidence" value="ECO:0007669"/>
    <property type="project" value="UniProtKB-UniRule"/>
</dbReference>
<dbReference type="Gene3D" id="3.30.300.130">
    <property type="entry name" value="Fe-S cluster assembly (FSCA)"/>
    <property type="match status" value="1"/>
</dbReference>
<dbReference type="Gene3D" id="2.60.300.12">
    <property type="entry name" value="HesB-like domain"/>
    <property type="match status" value="1"/>
</dbReference>
<dbReference type="HAMAP" id="MF_01637">
    <property type="entry name" value="Fe_S_biogen_NfuA"/>
    <property type="match status" value="1"/>
</dbReference>
<dbReference type="InterPro" id="IPR017726">
    <property type="entry name" value="Fe/S_biogenesis_protein_NfuA"/>
</dbReference>
<dbReference type="InterPro" id="IPR000361">
    <property type="entry name" value="FeS_biogenesis"/>
</dbReference>
<dbReference type="InterPro" id="IPR034904">
    <property type="entry name" value="FSCA_dom_sf"/>
</dbReference>
<dbReference type="InterPro" id="IPR035903">
    <property type="entry name" value="HesB-like_dom_sf"/>
</dbReference>
<dbReference type="InterPro" id="IPR001075">
    <property type="entry name" value="NIF_FeS_clus_asmbl_NifU_C"/>
</dbReference>
<dbReference type="NCBIfam" id="NF008392">
    <property type="entry name" value="PRK11190.1"/>
    <property type="match status" value="1"/>
</dbReference>
<dbReference type="NCBIfam" id="TIGR03341">
    <property type="entry name" value="YhgI_GntY"/>
    <property type="match status" value="1"/>
</dbReference>
<dbReference type="PANTHER" id="PTHR11178:SF51">
    <property type="entry name" value="FE_S BIOGENESIS PROTEIN NFUA"/>
    <property type="match status" value="1"/>
</dbReference>
<dbReference type="PANTHER" id="PTHR11178">
    <property type="entry name" value="IRON-SULFUR CLUSTER SCAFFOLD PROTEIN NFU-RELATED"/>
    <property type="match status" value="1"/>
</dbReference>
<dbReference type="Pfam" id="PF01521">
    <property type="entry name" value="Fe-S_biosyn"/>
    <property type="match status" value="1"/>
</dbReference>
<dbReference type="Pfam" id="PF01106">
    <property type="entry name" value="NifU"/>
    <property type="match status" value="1"/>
</dbReference>
<dbReference type="SUPFAM" id="SSF117916">
    <property type="entry name" value="Fe-S cluster assembly (FSCA) domain-like"/>
    <property type="match status" value="1"/>
</dbReference>
<dbReference type="SUPFAM" id="SSF89360">
    <property type="entry name" value="HesB-like domain"/>
    <property type="match status" value="1"/>
</dbReference>